<sequence>MMEEYQEINKILHEIDDGNTKRKVQLVKNKKDGKLYVCKTIDFNNNNETKDSKVKREREYLFLKQYSSPSFSHLNIAKYIKHFETRDNHGYLQKLTIIIEYYEGGDLTNLKNLNEVLPKDIIYLFFTMLVILKEFKNSIIHRDIKPENIFFVKNGPDLEFYLGDMGSSSMVITDQKNTLIGTNQYMAPEIDLGGYTCKVDIYSLGKTMLSLITLVHSPMNSIFESLFQLCTLENFKIRPSIDQLIEFVCRQYDQSRYTISLSSYTHPNTRSIIKYFKDKKFNILKEGEKINFKIDIQSKFYNCISVYRGFAYNEYIVEEEEKEKEEYQKEENQQSIPNVLSIVELIQPPLQDLSKDFENVLINHINYIRDGGINGSIRSLLHPDIIIKTKCDRVKGFEIKAHSNITNTEGLFIENAHLIYKPVNLSWKKIFLEREDEITPDVQLKAVFLSLLVAFKISNDENDFLTGTLFDKLMEHIYFVKSPSLPPPSQISPIKEPLSSYELKISFPFNHRAHIYGVKVPLNPNYLNLFFGGEIKDTLISNLIQTLNILAPNNLQYKSILIKLISIILKEEKRILKSYSNLGLEIYFKEFNEIIKNEIALEGIVSDKLLVSKIDTTKKIEKIRGFRNGHSNSDADIYISEFKGKYYAIDKFEHIPGLFEILEPFSNKAIDDFNQHFKFISTFVDVNESFGLVYTIFELPSSLINSYQTTRKSCENKNILDKDKTFRNLLNQHLSYYQNIQNNRYKLNGTDLTSKKLSFTEYQYNIIISNDCDIHYYFSFVGKNGSGLVQSFFDIGAWVYGDENVKKIKVLSFFYLLQCLFDYQTKNTHNSVDIDFPNILYYLKKFYYSSLVDYGLNGMDSSSKIFNYDLNNSYSFIKIGFLIYNILDLYKPNIIPDQTLYYDSDLIVMLLENSSNKFLCFRKQYYSDLDKTKLKLTPENIVPQNNDNDNSIILLPLLIIKDDITSFHFFDYNLKDSIKTIEDFNNEKECLLYYLQNIQKNPSNANSLVLINLNLFEENESTDNESFLFFDIFYLIKQLHGLSTIIDSWDNFISSLSKPISLVSNYIQTNLKKILDDPLSIDILYNDESMSHFKPFIYDKIKEIKKNVWLIRDKNNNNYIRKLSGYIKSKFKEVEKYGFEFIDDVSISNPYLKIAVENGWPISFLSSHFKRDNSNLFDYLFNKELIILELLKEKGVDGISQLESYFVENNIIYILTKYHGDYSNLEEINELNQEDLFEILVQMSDKLKILESLQIYHRDIKPENILFKREIVNGNIQSKVCLIDFSISDFGFILKTNESGSKMYQAPEIYQEEYRSKENDITNQHYKLDIYSLGFTLSHLMKKFNCNPPSLVQIVKKMIKHKAFLLKQPTL</sequence>
<keyword id="KW-0067">ATP-binding</keyword>
<keyword id="KW-0418">Kinase</keyword>
<keyword id="KW-0547">Nucleotide-binding</keyword>
<keyword id="KW-1185">Reference proteome</keyword>
<keyword id="KW-0677">Repeat</keyword>
<keyword id="KW-0723">Serine/threonine-protein kinase</keyword>
<keyword id="KW-0808">Transferase</keyword>
<proteinExistence type="inferred from homology"/>
<accession>Q54C38</accession>
<gene>
    <name type="ORF">DDB_G0293292</name>
</gene>
<dbReference type="EC" id="2.7.11.1"/>
<dbReference type="EMBL" id="AAFI02000200">
    <property type="protein sequence ID" value="EAL60845.1"/>
    <property type="molecule type" value="Genomic_DNA"/>
</dbReference>
<dbReference type="RefSeq" id="XP_629228.1">
    <property type="nucleotide sequence ID" value="XM_629226.1"/>
</dbReference>
<dbReference type="SMR" id="Q54C38"/>
<dbReference type="FunCoup" id="Q54C38">
    <property type="interactions" value="640"/>
</dbReference>
<dbReference type="PaxDb" id="44689-DDB0219988"/>
<dbReference type="EnsemblProtists" id="EAL60845">
    <property type="protein sequence ID" value="EAL60845"/>
    <property type="gene ID" value="DDB_G0293292"/>
</dbReference>
<dbReference type="GeneID" id="8629110"/>
<dbReference type="KEGG" id="ddi:DDB_G0293292"/>
<dbReference type="dictyBase" id="DDB_G0293292"/>
<dbReference type="VEuPathDB" id="AmoebaDB:DDB_G0293292"/>
<dbReference type="eggNOG" id="KOG0589">
    <property type="taxonomic scope" value="Eukaryota"/>
</dbReference>
<dbReference type="eggNOG" id="KOG0595">
    <property type="taxonomic scope" value="Eukaryota"/>
</dbReference>
<dbReference type="HOGENOM" id="CLU_252337_0_0_1"/>
<dbReference type="InParanoid" id="Q54C38"/>
<dbReference type="OMA" id="QPIEIYI"/>
<dbReference type="PhylomeDB" id="Q54C38"/>
<dbReference type="PRO" id="PR:Q54C38"/>
<dbReference type="Proteomes" id="UP000002195">
    <property type="component" value="Chromosome 6"/>
</dbReference>
<dbReference type="GO" id="GO:0005634">
    <property type="term" value="C:nucleus"/>
    <property type="evidence" value="ECO:0000318"/>
    <property type="project" value="GO_Central"/>
</dbReference>
<dbReference type="GO" id="GO:0005524">
    <property type="term" value="F:ATP binding"/>
    <property type="evidence" value="ECO:0007669"/>
    <property type="project" value="UniProtKB-KW"/>
</dbReference>
<dbReference type="GO" id="GO:0106310">
    <property type="term" value="F:protein serine kinase activity"/>
    <property type="evidence" value="ECO:0007669"/>
    <property type="project" value="RHEA"/>
</dbReference>
<dbReference type="GO" id="GO:0004674">
    <property type="term" value="F:protein serine/threonine kinase activity"/>
    <property type="evidence" value="ECO:0000318"/>
    <property type="project" value="GO_Central"/>
</dbReference>
<dbReference type="Gene3D" id="3.30.200.20">
    <property type="entry name" value="Phosphorylase Kinase, domain 1"/>
    <property type="match status" value="1"/>
</dbReference>
<dbReference type="Gene3D" id="1.10.510.10">
    <property type="entry name" value="Transferase(Phosphotransferase) domain 1"/>
    <property type="match status" value="2"/>
</dbReference>
<dbReference type="InterPro" id="IPR011009">
    <property type="entry name" value="Kinase-like_dom_sf"/>
</dbReference>
<dbReference type="InterPro" id="IPR000719">
    <property type="entry name" value="Prot_kinase_dom"/>
</dbReference>
<dbReference type="InterPro" id="IPR008271">
    <property type="entry name" value="Ser/Thr_kinase_AS"/>
</dbReference>
<dbReference type="PANTHER" id="PTHR24363">
    <property type="entry name" value="SERINE/THREONINE PROTEIN KINASE"/>
    <property type="match status" value="1"/>
</dbReference>
<dbReference type="PANTHER" id="PTHR24363:SF0">
    <property type="entry name" value="SERINE_THREONINE KINASE LIKE DOMAIN CONTAINING 1"/>
    <property type="match status" value="1"/>
</dbReference>
<dbReference type="Pfam" id="PF00069">
    <property type="entry name" value="Pkinase"/>
    <property type="match status" value="2"/>
</dbReference>
<dbReference type="SMART" id="SM00220">
    <property type="entry name" value="S_TKc"/>
    <property type="match status" value="1"/>
</dbReference>
<dbReference type="SUPFAM" id="SSF56112">
    <property type="entry name" value="Protein kinase-like (PK-like)"/>
    <property type="match status" value="2"/>
</dbReference>
<dbReference type="PROSITE" id="PS50011">
    <property type="entry name" value="PROTEIN_KINASE_DOM"/>
    <property type="match status" value="2"/>
</dbReference>
<dbReference type="PROSITE" id="PS00108">
    <property type="entry name" value="PROTEIN_KINASE_ST"/>
    <property type="match status" value="2"/>
</dbReference>
<organism>
    <name type="scientific">Dictyostelium discoideum</name>
    <name type="common">Social amoeba</name>
    <dbReference type="NCBI Taxonomy" id="44689"/>
    <lineage>
        <taxon>Eukaryota</taxon>
        <taxon>Amoebozoa</taxon>
        <taxon>Evosea</taxon>
        <taxon>Eumycetozoa</taxon>
        <taxon>Dictyostelia</taxon>
        <taxon>Dictyosteliales</taxon>
        <taxon>Dictyosteliaceae</taxon>
        <taxon>Dictyostelium</taxon>
    </lineage>
</organism>
<comment type="catalytic activity">
    <reaction>
        <text>L-seryl-[protein] + ATP = O-phospho-L-seryl-[protein] + ADP + H(+)</text>
        <dbReference type="Rhea" id="RHEA:17989"/>
        <dbReference type="Rhea" id="RHEA-COMP:9863"/>
        <dbReference type="Rhea" id="RHEA-COMP:11604"/>
        <dbReference type="ChEBI" id="CHEBI:15378"/>
        <dbReference type="ChEBI" id="CHEBI:29999"/>
        <dbReference type="ChEBI" id="CHEBI:30616"/>
        <dbReference type="ChEBI" id="CHEBI:83421"/>
        <dbReference type="ChEBI" id="CHEBI:456216"/>
        <dbReference type="EC" id="2.7.11.1"/>
    </reaction>
</comment>
<comment type="catalytic activity">
    <reaction>
        <text>L-threonyl-[protein] + ATP = O-phospho-L-threonyl-[protein] + ADP + H(+)</text>
        <dbReference type="Rhea" id="RHEA:46608"/>
        <dbReference type="Rhea" id="RHEA-COMP:11060"/>
        <dbReference type="Rhea" id="RHEA-COMP:11605"/>
        <dbReference type="ChEBI" id="CHEBI:15378"/>
        <dbReference type="ChEBI" id="CHEBI:30013"/>
        <dbReference type="ChEBI" id="CHEBI:30616"/>
        <dbReference type="ChEBI" id="CHEBI:61977"/>
        <dbReference type="ChEBI" id="CHEBI:456216"/>
        <dbReference type="EC" id="2.7.11.1"/>
    </reaction>
</comment>
<comment type="domain">
    <text>The protein kinase domain 2 is predicted to be catalytically inactive.</text>
</comment>
<comment type="similarity">
    <text evidence="1">Belongs to the protein kinase superfamily. Ser/Thr protein kinase family.</text>
</comment>
<evidence type="ECO:0000255" key="1">
    <source>
        <dbReference type="PROSITE-ProRule" id="PRU00159"/>
    </source>
</evidence>
<evidence type="ECO:0000255" key="2">
    <source>
        <dbReference type="PROSITE-ProRule" id="PRU10027"/>
    </source>
</evidence>
<reference key="1">
    <citation type="journal article" date="2005" name="Nature">
        <title>The genome of the social amoeba Dictyostelium discoideum.</title>
        <authorList>
            <person name="Eichinger L."/>
            <person name="Pachebat J.A."/>
            <person name="Gloeckner G."/>
            <person name="Rajandream M.A."/>
            <person name="Sucgang R."/>
            <person name="Berriman M."/>
            <person name="Song J."/>
            <person name="Olsen R."/>
            <person name="Szafranski K."/>
            <person name="Xu Q."/>
            <person name="Tunggal B."/>
            <person name="Kummerfeld S."/>
            <person name="Madera M."/>
            <person name="Konfortov B.A."/>
            <person name="Rivero F."/>
            <person name="Bankier A.T."/>
            <person name="Lehmann R."/>
            <person name="Hamlin N."/>
            <person name="Davies R."/>
            <person name="Gaudet P."/>
            <person name="Fey P."/>
            <person name="Pilcher K."/>
            <person name="Chen G."/>
            <person name="Saunders D."/>
            <person name="Sodergren E.J."/>
            <person name="Davis P."/>
            <person name="Kerhornou A."/>
            <person name="Nie X."/>
            <person name="Hall N."/>
            <person name="Anjard C."/>
            <person name="Hemphill L."/>
            <person name="Bason N."/>
            <person name="Farbrother P."/>
            <person name="Desany B."/>
            <person name="Just E."/>
            <person name="Morio T."/>
            <person name="Rost R."/>
            <person name="Churcher C.M."/>
            <person name="Cooper J."/>
            <person name="Haydock S."/>
            <person name="van Driessche N."/>
            <person name="Cronin A."/>
            <person name="Goodhead I."/>
            <person name="Muzny D.M."/>
            <person name="Mourier T."/>
            <person name="Pain A."/>
            <person name="Lu M."/>
            <person name="Harper D."/>
            <person name="Lindsay R."/>
            <person name="Hauser H."/>
            <person name="James K.D."/>
            <person name="Quiles M."/>
            <person name="Madan Babu M."/>
            <person name="Saito T."/>
            <person name="Buchrieser C."/>
            <person name="Wardroper A."/>
            <person name="Felder M."/>
            <person name="Thangavelu M."/>
            <person name="Johnson D."/>
            <person name="Knights A."/>
            <person name="Loulseged H."/>
            <person name="Mungall K.L."/>
            <person name="Oliver K."/>
            <person name="Price C."/>
            <person name="Quail M.A."/>
            <person name="Urushihara H."/>
            <person name="Hernandez J."/>
            <person name="Rabbinowitsch E."/>
            <person name="Steffen D."/>
            <person name="Sanders M."/>
            <person name="Ma J."/>
            <person name="Kohara Y."/>
            <person name="Sharp S."/>
            <person name="Simmonds M.N."/>
            <person name="Spiegler S."/>
            <person name="Tivey A."/>
            <person name="Sugano S."/>
            <person name="White B."/>
            <person name="Walker D."/>
            <person name="Woodward J.R."/>
            <person name="Winckler T."/>
            <person name="Tanaka Y."/>
            <person name="Shaulsky G."/>
            <person name="Schleicher M."/>
            <person name="Weinstock G.M."/>
            <person name="Rosenthal A."/>
            <person name="Cox E.C."/>
            <person name="Chisholm R.L."/>
            <person name="Gibbs R.A."/>
            <person name="Loomis W.F."/>
            <person name="Platzer M."/>
            <person name="Kay R.R."/>
            <person name="Williams J.G."/>
            <person name="Dear P.H."/>
            <person name="Noegel A.A."/>
            <person name="Barrell B.G."/>
            <person name="Kuspa A."/>
        </authorList>
    </citation>
    <scope>NUCLEOTIDE SEQUENCE [LARGE SCALE GENOMIC DNA]</scope>
    <source>
        <strain>AX4</strain>
    </source>
</reference>
<feature type="chain" id="PRO_0000362070" description="Probable serine/threonine-protein kinase DDB_G0293292">
    <location>
        <begin position="1"/>
        <end position="1371"/>
    </location>
</feature>
<feature type="domain" description="Protein kinase 1" evidence="1">
    <location>
        <begin position="9"/>
        <end position="269"/>
    </location>
</feature>
<feature type="domain" description="Protein kinase 2" evidence="1">
    <location>
        <begin position="1131"/>
        <end position="1371"/>
    </location>
</feature>
<feature type="active site" description="Proton acceptor" evidence="1 2">
    <location>
        <position position="143"/>
    </location>
</feature>
<feature type="binding site" evidence="1">
    <location>
        <begin position="15"/>
        <end position="23"/>
    </location>
    <ligand>
        <name>ATP</name>
        <dbReference type="ChEBI" id="CHEBI:30616"/>
    </ligand>
</feature>
<feature type="binding site" evidence="1">
    <location>
        <position position="39"/>
    </location>
    <ligand>
        <name>ATP</name>
        <dbReference type="ChEBI" id="CHEBI:30616"/>
    </ligand>
</feature>
<protein>
    <recommendedName>
        <fullName>Probable serine/threonine-protein kinase DDB_G0293292</fullName>
        <ecNumber>2.7.11.1</ecNumber>
    </recommendedName>
</protein>
<name>Y9988_DICDI</name>